<name>RL7_STAA3</name>
<comment type="function">
    <text evidence="1">Forms part of the ribosomal stalk which helps the ribosome interact with GTP-bound translation factors. Is thus essential for accurate translation.</text>
</comment>
<comment type="subunit">
    <text evidence="1">Homodimer. Part of the ribosomal stalk of the 50S ribosomal subunit. Forms a multimeric L10(L12)X complex, where L10 forms an elongated spine to which 2 to 4 L12 dimers bind in a sequential fashion. Binds GTP-bound translation factors.</text>
</comment>
<comment type="similarity">
    <text evidence="1">Belongs to the bacterial ribosomal protein bL12 family.</text>
</comment>
<accession>Q2FJA0</accession>
<dbReference type="EMBL" id="CP000255">
    <property type="protein sequence ID" value="ABD21943.1"/>
    <property type="molecule type" value="Genomic_DNA"/>
</dbReference>
<dbReference type="RefSeq" id="WP_001273586.1">
    <property type="nucleotide sequence ID" value="NZ_CP027476.1"/>
</dbReference>
<dbReference type="SMR" id="Q2FJA0"/>
<dbReference type="GeneID" id="98344874"/>
<dbReference type="KEGG" id="saa:SAUSA300_0525"/>
<dbReference type="HOGENOM" id="CLU_086499_3_2_9"/>
<dbReference type="OMA" id="LEDKWGV"/>
<dbReference type="Proteomes" id="UP000001939">
    <property type="component" value="Chromosome"/>
</dbReference>
<dbReference type="GO" id="GO:0022625">
    <property type="term" value="C:cytosolic large ribosomal subunit"/>
    <property type="evidence" value="ECO:0007669"/>
    <property type="project" value="TreeGrafter"/>
</dbReference>
<dbReference type="GO" id="GO:0003729">
    <property type="term" value="F:mRNA binding"/>
    <property type="evidence" value="ECO:0007669"/>
    <property type="project" value="TreeGrafter"/>
</dbReference>
<dbReference type="GO" id="GO:0003735">
    <property type="term" value="F:structural constituent of ribosome"/>
    <property type="evidence" value="ECO:0007669"/>
    <property type="project" value="InterPro"/>
</dbReference>
<dbReference type="GO" id="GO:0006412">
    <property type="term" value="P:translation"/>
    <property type="evidence" value="ECO:0007669"/>
    <property type="project" value="UniProtKB-UniRule"/>
</dbReference>
<dbReference type="CDD" id="cd00387">
    <property type="entry name" value="Ribosomal_L7_L12"/>
    <property type="match status" value="1"/>
</dbReference>
<dbReference type="FunFam" id="1.20.5.710:FF:000002">
    <property type="entry name" value="50S ribosomal protein L7/L12"/>
    <property type="match status" value="1"/>
</dbReference>
<dbReference type="FunFam" id="3.30.1390.10:FF:000001">
    <property type="entry name" value="50S ribosomal protein L7/L12"/>
    <property type="match status" value="1"/>
</dbReference>
<dbReference type="Gene3D" id="3.30.1390.10">
    <property type="match status" value="1"/>
</dbReference>
<dbReference type="Gene3D" id="1.20.5.710">
    <property type="entry name" value="Single helix bin"/>
    <property type="match status" value="1"/>
</dbReference>
<dbReference type="HAMAP" id="MF_00368">
    <property type="entry name" value="Ribosomal_bL12"/>
    <property type="match status" value="1"/>
</dbReference>
<dbReference type="InterPro" id="IPR000206">
    <property type="entry name" value="Ribosomal_bL12"/>
</dbReference>
<dbReference type="InterPro" id="IPR013823">
    <property type="entry name" value="Ribosomal_bL12_C"/>
</dbReference>
<dbReference type="InterPro" id="IPR014719">
    <property type="entry name" value="Ribosomal_bL12_C/ClpS-like"/>
</dbReference>
<dbReference type="InterPro" id="IPR008932">
    <property type="entry name" value="Ribosomal_bL12_oligo"/>
</dbReference>
<dbReference type="InterPro" id="IPR036235">
    <property type="entry name" value="Ribosomal_bL12_oligo_N_sf"/>
</dbReference>
<dbReference type="NCBIfam" id="TIGR00855">
    <property type="entry name" value="L12"/>
    <property type="match status" value="1"/>
</dbReference>
<dbReference type="PANTHER" id="PTHR45987">
    <property type="entry name" value="39S RIBOSOMAL PROTEIN L12"/>
    <property type="match status" value="1"/>
</dbReference>
<dbReference type="PANTHER" id="PTHR45987:SF4">
    <property type="entry name" value="LARGE RIBOSOMAL SUBUNIT PROTEIN BL12M"/>
    <property type="match status" value="1"/>
</dbReference>
<dbReference type="Pfam" id="PF00542">
    <property type="entry name" value="Ribosomal_L12"/>
    <property type="match status" value="1"/>
</dbReference>
<dbReference type="Pfam" id="PF16320">
    <property type="entry name" value="Ribosomal_L12_N"/>
    <property type="match status" value="1"/>
</dbReference>
<dbReference type="SUPFAM" id="SSF54736">
    <property type="entry name" value="ClpS-like"/>
    <property type="match status" value="1"/>
</dbReference>
<dbReference type="SUPFAM" id="SSF48300">
    <property type="entry name" value="Ribosomal protein L7/12, oligomerisation (N-terminal) domain"/>
    <property type="match status" value="1"/>
</dbReference>
<feature type="chain" id="PRO_0000243498" description="Large ribosomal subunit protein bL12">
    <location>
        <begin position="1"/>
        <end position="122"/>
    </location>
</feature>
<reference key="1">
    <citation type="journal article" date="2006" name="Lancet">
        <title>Complete genome sequence of USA300, an epidemic clone of community-acquired meticillin-resistant Staphylococcus aureus.</title>
        <authorList>
            <person name="Diep B.A."/>
            <person name="Gill S.R."/>
            <person name="Chang R.F."/>
            <person name="Phan T.H."/>
            <person name="Chen J.H."/>
            <person name="Davidson M.G."/>
            <person name="Lin F."/>
            <person name="Lin J."/>
            <person name="Carleton H.A."/>
            <person name="Mongodin E.F."/>
            <person name="Sensabaugh G.F."/>
            <person name="Perdreau-Remington F."/>
        </authorList>
    </citation>
    <scope>NUCLEOTIDE SEQUENCE [LARGE SCALE GENOMIC DNA]</scope>
    <source>
        <strain>USA300</strain>
    </source>
</reference>
<protein>
    <recommendedName>
        <fullName evidence="1">Large ribosomal subunit protein bL12</fullName>
    </recommendedName>
    <alternativeName>
        <fullName evidence="2">50S ribosomal protein L7/L12</fullName>
    </alternativeName>
</protein>
<keyword id="KW-0687">Ribonucleoprotein</keyword>
<keyword id="KW-0689">Ribosomal protein</keyword>
<gene>
    <name evidence="1" type="primary">rplL</name>
    <name type="ordered locus">SAUSA300_0525</name>
</gene>
<evidence type="ECO:0000255" key="1">
    <source>
        <dbReference type="HAMAP-Rule" id="MF_00368"/>
    </source>
</evidence>
<evidence type="ECO:0000305" key="2"/>
<sequence>MANHEQIIEAIKEMSVLELNDLVKAIEEEFGVTAAAPVAVAGAAGGADAAAEKTEFDVELTSAGSSKIKVVKAVKEATGLGLKDAKELVDGAPKVIKEALPKEEAEKLKEQLEEVGATVELK</sequence>
<proteinExistence type="inferred from homology"/>
<organism>
    <name type="scientific">Staphylococcus aureus (strain USA300)</name>
    <dbReference type="NCBI Taxonomy" id="367830"/>
    <lineage>
        <taxon>Bacteria</taxon>
        <taxon>Bacillati</taxon>
        <taxon>Bacillota</taxon>
        <taxon>Bacilli</taxon>
        <taxon>Bacillales</taxon>
        <taxon>Staphylococcaceae</taxon>
        <taxon>Staphylococcus</taxon>
    </lineage>
</organism>